<accession>Q0B0S6</accession>
<comment type="function">
    <text evidence="1">Hydrolyzes ribosome-free peptidyl-tRNAs (with 1 or more amino acids incorporated), which drop off the ribosome during protein synthesis, or as a result of ribosome stalling.</text>
</comment>
<comment type="function">
    <text evidence="1">Catalyzes the release of premature peptidyl moieties from peptidyl-tRNA molecules trapped in stalled 50S ribosomal subunits, and thus maintains levels of free tRNAs and 50S ribosomes.</text>
</comment>
<comment type="catalytic activity">
    <reaction evidence="1">
        <text>an N-acyl-L-alpha-aminoacyl-tRNA + H2O = an N-acyl-L-amino acid + a tRNA + H(+)</text>
        <dbReference type="Rhea" id="RHEA:54448"/>
        <dbReference type="Rhea" id="RHEA-COMP:10123"/>
        <dbReference type="Rhea" id="RHEA-COMP:13883"/>
        <dbReference type="ChEBI" id="CHEBI:15377"/>
        <dbReference type="ChEBI" id="CHEBI:15378"/>
        <dbReference type="ChEBI" id="CHEBI:59874"/>
        <dbReference type="ChEBI" id="CHEBI:78442"/>
        <dbReference type="ChEBI" id="CHEBI:138191"/>
        <dbReference type="EC" id="3.1.1.29"/>
    </reaction>
</comment>
<comment type="subunit">
    <text evidence="1">Monomer.</text>
</comment>
<comment type="subcellular location">
    <subcellularLocation>
        <location evidence="1">Cytoplasm</location>
    </subcellularLocation>
</comment>
<comment type="similarity">
    <text evidence="1">Belongs to the PTH family.</text>
</comment>
<gene>
    <name evidence="1" type="primary">pth</name>
    <name type="ordered locus">Swol_0070</name>
</gene>
<reference key="1">
    <citation type="journal article" date="2010" name="Environ. Microbiol.">
        <title>The genome of Syntrophomonas wolfei: new insights into syntrophic metabolism and biohydrogen production.</title>
        <authorList>
            <person name="Sieber J.R."/>
            <person name="Sims D.R."/>
            <person name="Han C."/>
            <person name="Kim E."/>
            <person name="Lykidis A."/>
            <person name="Lapidus A.L."/>
            <person name="McDonnald E."/>
            <person name="Rohlin L."/>
            <person name="Culley D.E."/>
            <person name="Gunsalus R."/>
            <person name="McInerney M.J."/>
        </authorList>
    </citation>
    <scope>NUCLEOTIDE SEQUENCE [LARGE SCALE GENOMIC DNA]</scope>
    <source>
        <strain>DSM 2245B / Goettingen</strain>
    </source>
</reference>
<keyword id="KW-0963">Cytoplasm</keyword>
<keyword id="KW-0378">Hydrolase</keyword>
<keyword id="KW-1185">Reference proteome</keyword>
<keyword id="KW-0694">RNA-binding</keyword>
<keyword id="KW-0820">tRNA-binding</keyword>
<sequence length="183" mass="20392">MKMLVGLGNPGKKYSHTRHNIGFKVLEELARRHQIEKEESRYDAIVGHLRINQEKLLLVKPLTFMNLSGKAVRPLFNWFKLELSELLVVYDDMDLPPGTVRIRASGGTGGHKGMQSICESLGSRDFPRIRIGIGRPPGGAIDWVLGEFSESEKPLMQDAIEKAASAIECWVKSGIDASMNAYN</sequence>
<proteinExistence type="inferred from homology"/>
<organism>
    <name type="scientific">Syntrophomonas wolfei subsp. wolfei (strain DSM 2245B / Goettingen)</name>
    <dbReference type="NCBI Taxonomy" id="335541"/>
    <lineage>
        <taxon>Bacteria</taxon>
        <taxon>Bacillati</taxon>
        <taxon>Bacillota</taxon>
        <taxon>Clostridia</taxon>
        <taxon>Eubacteriales</taxon>
        <taxon>Syntrophomonadaceae</taxon>
        <taxon>Syntrophomonas</taxon>
    </lineage>
</organism>
<name>PTH_SYNWW</name>
<protein>
    <recommendedName>
        <fullName evidence="1">Peptidyl-tRNA hydrolase</fullName>
        <shortName evidence="1">Pth</shortName>
        <ecNumber evidence="1">3.1.1.29</ecNumber>
    </recommendedName>
</protein>
<evidence type="ECO:0000255" key="1">
    <source>
        <dbReference type="HAMAP-Rule" id="MF_00083"/>
    </source>
</evidence>
<dbReference type="EC" id="3.1.1.29" evidence="1"/>
<dbReference type="EMBL" id="CP000448">
    <property type="protein sequence ID" value="ABI67428.1"/>
    <property type="molecule type" value="Genomic_DNA"/>
</dbReference>
<dbReference type="RefSeq" id="WP_011639539.1">
    <property type="nucleotide sequence ID" value="NC_008346.1"/>
</dbReference>
<dbReference type="SMR" id="Q0B0S6"/>
<dbReference type="STRING" id="335541.Swol_0070"/>
<dbReference type="KEGG" id="swo:Swol_0070"/>
<dbReference type="eggNOG" id="COG0193">
    <property type="taxonomic scope" value="Bacteria"/>
</dbReference>
<dbReference type="HOGENOM" id="CLU_062456_4_1_9"/>
<dbReference type="OrthoDB" id="9800507at2"/>
<dbReference type="Proteomes" id="UP000001968">
    <property type="component" value="Chromosome"/>
</dbReference>
<dbReference type="GO" id="GO:0005737">
    <property type="term" value="C:cytoplasm"/>
    <property type="evidence" value="ECO:0007669"/>
    <property type="project" value="UniProtKB-SubCell"/>
</dbReference>
<dbReference type="GO" id="GO:0004045">
    <property type="term" value="F:peptidyl-tRNA hydrolase activity"/>
    <property type="evidence" value="ECO:0007669"/>
    <property type="project" value="UniProtKB-UniRule"/>
</dbReference>
<dbReference type="GO" id="GO:0000049">
    <property type="term" value="F:tRNA binding"/>
    <property type="evidence" value="ECO:0007669"/>
    <property type="project" value="UniProtKB-UniRule"/>
</dbReference>
<dbReference type="GO" id="GO:0006515">
    <property type="term" value="P:protein quality control for misfolded or incompletely synthesized proteins"/>
    <property type="evidence" value="ECO:0007669"/>
    <property type="project" value="UniProtKB-UniRule"/>
</dbReference>
<dbReference type="GO" id="GO:0072344">
    <property type="term" value="P:rescue of stalled ribosome"/>
    <property type="evidence" value="ECO:0007669"/>
    <property type="project" value="UniProtKB-UniRule"/>
</dbReference>
<dbReference type="CDD" id="cd00462">
    <property type="entry name" value="PTH"/>
    <property type="match status" value="1"/>
</dbReference>
<dbReference type="FunFam" id="3.40.50.1470:FF:000001">
    <property type="entry name" value="Peptidyl-tRNA hydrolase"/>
    <property type="match status" value="1"/>
</dbReference>
<dbReference type="Gene3D" id="3.40.50.1470">
    <property type="entry name" value="Peptidyl-tRNA hydrolase"/>
    <property type="match status" value="1"/>
</dbReference>
<dbReference type="HAMAP" id="MF_00083">
    <property type="entry name" value="Pept_tRNA_hydro_bact"/>
    <property type="match status" value="1"/>
</dbReference>
<dbReference type="InterPro" id="IPR001328">
    <property type="entry name" value="Pept_tRNA_hydro"/>
</dbReference>
<dbReference type="InterPro" id="IPR018171">
    <property type="entry name" value="Pept_tRNA_hydro_CS"/>
</dbReference>
<dbReference type="InterPro" id="IPR036416">
    <property type="entry name" value="Pept_tRNA_hydro_sf"/>
</dbReference>
<dbReference type="NCBIfam" id="TIGR00447">
    <property type="entry name" value="pth"/>
    <property type="match status" value="1"/>
</dbReference>
<dbReference type="PANTHER" id="PTHR17224">
    <property type="entry name" value="PEPTIDYL-TRNA HYDROLASE"/>
    <property type="match status" value="1"/>
</dbReference>
<dbReference type="PANTHER" id="PTHR17224:SF1">
    <property type="entry name" value="PEPTIDYL-TRNA HYDROLASE"/>
    <property type="match status" value="1"/>
</dbReference>
<dbReference type="Pfam" id="PF01195">
    <property type="entry name" value="Pept_tRNA_hydro"/>
    <property type="match status" value="1"/>
</dbReference>
<dbReference type="SUPFAM" id="SSF53178">
    <property type="entry name" value="Peptidyl-tRNA hydrolase-like"/>
    <property type="match status" value="1"/>
</dbReference>
<dbReference type="PROSITE" id="PS01195">
    <property type="entry name" value="PEPT_TRNA_HYDROL_1"/>
    <property type="match status" value="1"/>
</dbReference>
<feature type="chain" id="PRO_0000264129" description="Peptidyl-tRNA hydrolase">
    <location>
        <begin position="1"/>
        <end position="183"/>
    </location>
</feature>
<feature type="active site" description="Proton acceptor" evidence="1">
    <location>
        <position position="19"/>
    </location>
</feature>
<feature type="binding site" evidence="1">
    <location>
        <position position="14"/>
    </location>
    <ligand>
        <name>tRNA</name>
        <dbReference type="ChEBI" id="CHEBI:17843"/>
    </ligand>
</feature>
<feature type="binding site" evidence="1">
    <location>
        <position position="64"/>
    </location>
    <ligand>
        <name>tRNA</name>
        <dbReference type="ChEBI" id="CHEBI:17843"/>
    </ligand>
</feature>
<feature type="binding site" evidence="1">
    <location>
        <position position="66"/>
    </location>
    <ligand>
        <name>tRNA</name>
        <dbReference type="ChEBI" id="CHEBI:17843"/>
    </ligand>
</feature>
<feature type="site" description="Discriminates between blocked and unblocked aminoacyl-tRNA" evidence="1">
    <location>
        <position position="9"/>
    </location>
</feature>
<feature type="site" description="Stabilizes the basic form of H active site to accept a proton" evidence="1">
    <location>
        <position position="91"/>
    </location>
</feature>